<feature type="chain" id="PRO_0000179021" description="GTPase Der">
    <location>
        <begin position="1"/>
        <end position="485"/>
    </location>
</feature>
<feature type="domain" description="EngA-type G 1">
    <location>
        <begin position="3"/>
        <end position="167"/>
    </location>
</feature>
<feature type="domain" description="EngA-type G 2">
    <location>
        <begin position="176"/>
        <end position="349"/>
    </location>
</feature>
<feature type="domain" description="KH-like" evidence="1">
    <location>
        <begin position="350"/>
        <end position="434"/>
    </location>
</feature>
<feature type="region of interest" description="Disordered" evidence="2">
    <location>
        <begin position="435"/>
        <end position="485"/>
    </location>
</feature>
<feature type="compositionally biased region" description="Basic and acidic residues" evidence="2">
    <location>
        <begin position="457"/>
        <end position="469"/>
    </location>
</feature>
<feature type="compositionally biased region" description="Basic residues" evidence="2">
    <location>
        <begin position="470"/>
        <end position="485"/>
    </location>
</feature>
<feature type="binding site" evidence="1">
    <location>
        <begin position="9"/>
        <end position="16"/>
    </location>
    <ligand>
        <name>GTP</name>
        <dbReference type="ChEBI" id="CHEBI:37565"/>
        <label>1</label>
    </ligand>
</feature>
<feature type="binding site" evidence="1">
    <location>
        <begin position="56"/>
        <end position="60"/>
    </location>
    <ligand>
        <name>GTP</name>
        <dbReference type="ChEBI" id="CHEBI:37565"/>
        <label>1</label>
    </ligand>
</feature>
<feature type="binding site" evidence="1">
    <location>
        <begin position="119"/>
        <end position="122"/>
    </location>
    <ligand>
        <name>GTP</name>
        <dbReference type="ChEBI" id="CHEBI:37565"/>
        <label>1</label>
    </ligand>
</feature>
<feature type="binding site" evidence="1">
    <location>
        <begin position="182"/>
        <end position="189"/>
    </location>
    <ligand>
        <name>GTP</name>
        <dbReference type="ChEBI" id="CHEBI:37565"/>
        <label>2</label>
    </ligand>
</feature>
<feature type="binding site" evidence="1">
    <location>
        <begin position="229"/>
        <end position="233"/>
    </location>
    <ligand>
        <name>GTP</name>
        <dbReference type="ChEBI" id="CHEBI:37565"/>
        <label>2</label>
    </ligand>
</feature>
<feature type="binding site" evidence="1">
    <location>
        <begin position="294"/>
        <end position="297"/>
    </location>
    <ligand>
        <name>GTP</name>
        <dbReference type="ChEBI" id="CHEBI:37565"/>
        <label>2</label>
    </ligand>
</feature>
<name>DER_NEIMB</name>
<sequence>MKPTIALVGRPNVGKSTLFNRLTRTKDALVHDLPGLTRDRHYGHGKVGSKPYLVIDTGGFEPVVDSGILHEMAKQTLQAVDEADAVVFLVDGRTGLTPQDKIIADRLRQSPRPVYLAVNKGEGGNRAVLAAEFYELALGDPYVISGAHGDGVYYLIEDILEKFPEPEAEEADARHPVFAVIGRPNVGKSTLVNAILGEERVITFDMAGTTRDSIHIDFEREGKPFTIIDTAGVRRRGKVDEAVEKFSVIKAMQAVEAANVAVLVLDAQQDIADQDATIAGFALEAGRALVVAVNKWDGISEERREQVKRDINRKLYFLDFAKFHFISALKERGIDGLFDSIQAAYNAAMIKMPTPKITRVLQSAIERQQPPRAGLVRPKMRYAHQGGMNPPVIVVHGNSLHAISDSYTRYLTQTFRKAFNLQGTPLRIQYNVSENPYENAEDKPKKKPLRRVSLSNRIEKREGRKEEKNRFKKKTKVSVKKQFSK</sequence>
<dbReference type="EMBL" id="AE002098">
    <property type="protein sequence ID" value="AAF41263.1"/>
    <property type="molecule type" value="Genomic_DNA"/>
</dbReference>
<dbReference type="PIR" id="G81149">
    <property type="entry name" value="G81149"/>
</dbReference>
<dbReference type="RefSeq" id="NP_273893.1">
    <property type="nucleotide sequence ID" value="NC_003112.2"/>
</dbReference>
<dbReference type="RefSeq" id="WP_002225394.1">
    <property type="nucleotide sequence ID" value="NC_003112.2"/>
</dbReference>
<dbReference type="SMR" id="Q9JZY1"/>
<dbReference type="FunCoup" id="Q9JZY1">
    <property type="interactions" value="484"/>
</dbReference>
<dbReference type="STRING" id="122586.NMB0852"/>
<dbReference type="PaxDb" id="122586-NMB0852"/>
<dbReference type="KEGG" id="nme:NMB0852"/>
<dbReference type="PATRIC" id="fig|122586.8.peg.1066"/>
<dbReference type="HOGENOM" id="CLU_016077_6_2_4"/>
<dbReference type="InParanoid" id="Q9JZY1"/>
<dbReference type="OrthoDB" id="9805918at2"/>
<dbReference type="Proteomes" id="UP000000425">
    <property type="component" value="Chromosome"/>
</dbReference>
<dbReference type="GO" id="GO:0016887">
    <property type="term" value="F:ATP hydrolysis activity"/>
    <property type="evidence" value="ECO:0007669"/>
    <property type="project" value="InterPro"/>
</dbReference>
<dbReference type="GO" id="GO:0005525">
    <property type="term" value="F:GTP binding"/>
    <property type="evidence" value="ECO:0007669"/>
    <property type="project" value="UniProtKB-UniRule"/>
</dbReference>
<dbReference type="GO" id="GO:0043022">
    <property type="term" value="F:ribosome binding"/>
    <property type="evidence" value="ECO:0000318"/>
    <property type="project" value="GO_Central"/>
</dbReference>
<dbReference type="GO" id="GO:0042254">
    <property type="term" value="P:ribosome biogenesis"/>
    <property type="evidence" value="ECO:0007669"/>
    <property type="project" value="UniProtKB-KW"/>
</dbReference>
<dbReference type="CDD" id="cd01894">
    <property type="entry name" value="EngA1"/>
    <property type="match status" value="1"/>
</dbReference>
<dbReference type="CDD" id="cd01895">
    <property type="entry name" value="EngA2"/>
    <property type="match status" value="1"/>
</dbReference>
<dbReference type="FunFam" id="3.30.300.20:FF:000023">
    <property type="entry name" value="GTPase Der"/>
    <property type="match status" value="1"/>
</dbReference>
<dbReference type="FunFam" id="3.40.50.300:FF:000040">
    <property type="entry name" value="GTPase Der"/>
    <property type="match status" value="1"/>
</dbReference>
<dbReference type="FunFam" id="3.40.50.300:FF:000057">
    <property type="entry name" value="GTPase Der"/>
    <property type="match status" value="1"/>
</dbReference>
<dbReference type="Gene3D" id="3.30.300.20">
    <property type="match status" value="1"/>
</dbReference>
<dbReference type="Gene3D" id="3.40.50.300">
    <property type="entry name" value="P-loop containing nucleotide triphosphate hydrolases"/>
    <property type="match status" value="2"/>
</dbReference>
<dbReference type="HAMAP" id="MF_00195">
    <property type="entry name" value="GTPase_Der"/>
    <property type="match status" value="1"/>
</dbReference>
<dbReference type="InterPro" id="IPR003593">
    <property type="entry name" value="AAA+_ATPase"/>
</dbReference>
<dbReference type="InterPro" id="IPR031166">
    <property type="entry name" value="G_ENGA"/>
</dbReference>
<dbReference type="InterPro" id="IPR006073">
    <property type="entry name" value="GTP-bd"/>
</dbReference>
<dbReference type="InterPro" id="IPR016484">
    <property type="entry name" value="GTPase_Der"/>
</dbReference>
<dbReference type="InterPro" id="IPR032859">
    <property type="entry name" value="KH_dom-like"/>
</dbReference>
<dbReference type="InterPro" id="IPR015946">
    <property type="entry name" value="KH_dom-like_a/b"/>
</dbReference>
<dbReference type="InterPro" id="IPR027417">
    <property type="entry name" value="P-loop_NTPase"/>
</dbReference>
<dbReference type="InterPro" id="IPR005225">
    <property type="entry name" value="Small_GTP-bd"/>
</dbReference>
<dbReference type="NCBIfam" id="TIGR03594">
    <property type="entry name" value="GTPase_EngA"/>
    <property type="match status" value="1"/>
</dbReference>
<dbReference type="NCBIfam" id="TIGR00231">
    <property type="entry name" value="small_GTP"/>
    <property type="match status" value="2"/>
</dbReference>
<dbReference type="PANTHER" id="PTHR43834">
    <property type="entry name" value="GTPASE DER"/>
    <property type="match status" value="1"/>
</dbReference>
<dbReference type="PANTHER" id="PTHR43834:SF6">
    <property type="entry name" value="GTPASE DER"/>
    <property type="match status" value="1"/>
</dbReference>
<dbReference type="Pfam" id="PF14714">
    <property type="entry name" value="KH_dom-like"/>
    <property type="match status" value="1"/>
</dbReference>
<dbReference type="Pfam" id="PF01926">
    <property type="entry name" value="MMR_HSR1"/>
    <property type="match status" value="2"/>
</dbReference>
<dbReference type="PIRSF" id="PIRSF006485">
    <property type="entry name" value="GTP-binding_EngA"/>
    <property type="match status" value="1"/>
</dbReference>
<dbReference type="PRINTS" id="PR00326">
    <property type="entry name" value="GTP1OBG"/>
</dbReference>
<dbReference type="SMART" id="SM00382">
    <property type="entry name" value="AAA"/>
    <property type="match status" value="2"/>
</dbReference>
<dbReference type="SUPFAM" id="SSF52540">
    <property type="entry name" value="P-loop containing nucleoside triphosphate hydrolases"/>
    <property type="match status" value="2"/>
</dbReference>
<dbReference type="PROSITE" id="PS51712">
    <property type="entry name" value="G_ENGA"/>
    <property type="match status" value="2"/>
</dbReference>
<reference key="1">
    <citation type="journal article" date="2000" name="Science">
        <title>Complete genome sequence of Neisseria meningitidis serogroup B strain MC58.</title>
        <authorList>
            <person name="Tettelin H."/>
            <person name="Saunders N.J."/>
            <person name="Heidelberg J.F."/>
            <person name="Jeffries A.C."/>
            <person name="Nelson K.E."/>
            <person name="Eisen J.A."/>
            <person name="Ketchum K.A."/>
            <person name="Hood D.W."/>
            <person name="Peden J.F."/>
            <person name="Dodson R.J."/>
            <person name="Nelson W.C."/>
            <person name="Gwinn M.L."/>
            <person name="DeBoy R.T."/>
            <person name="Peterson J.D."/>
            <person name="Hickey E.K."/>
            <person name="Haft D.H."/>
            <person name="Salzberg S.L."/>
            <person name="White O."/>
            <person name="Fleischmann R.D."/>
            <person name="Dougherty B.A."/>
            <person name="Mason T.M."/>
            <person name="Ciecko A."/>
            <person name="Parksey D.S."/>
            <person name="Blair E."/>
            <person name="Cittone H."/>
            <person name="Clark E.B."/>
            <person name="Cotton M.D."/>
            <person name="Utterback T.R."/>
            <person name="Khouri H.M."/>
            <person name="Qin H."/>
            <person name="Vamathevan J.J."/>
            <person name="Gill J."/>
            <person name="Scarlato V."/>
            <person name="Masignani V."/>
            <person name="Pizza M."/>
            <person name="Grandi G."/>
            <person name="Sun L."/>
            <person name="Smith H.O."/>
            <person name="Fraser C.M."/>
            <person name="Moxon E.R."/>
            <person name="Rappuoli R."/>
            <person name="Venter J.C."/>
        </authorList>
    </citation>
    <scope>NUCLEOTIDE SEQUENCE [LARGE SCALE GENOMIC DNA]</scope>
    <source>
        <strain>ATCC BAA-335 / MC58</strain>
    </source>
</reference>
<evidence type="ECO:0000255" key="1">
    <source>
        <dbReference type="HAMAP-Rule" id="MF_00195"/>
    </source>
</evidence>
<evidence type="ECO:0000256" key="2">
    <source>
        <dbReference type="SAM" id="MobiDB-lite"/>
    </source>
</evidence>
<organism>
    <name type="scientific">Neisseria meningitidis serogroup B (strain ATCC BAA-335 / MC58)</name>
    <dbReference type="NCBI Taxonomy" id="122586"/>
    <lineage>
        <taxon>Bacteria</taxon>
        <taxon>Pseudomonadati</taxon>
        <taxon>Pseudomonadota</taxon>
        <taxon>Betaproteobacteria</taxon>
        <taxon>Neisseriales</taxon>
        <taxon>Neisseriaceae</taxon>
        <taxon>Neisseria</taxon>
    </lineage>
</organism>
<protein>
    <recommendedName>
        <fullName evidence="1">GTPase Der</fullName>
    </recommendedName>
    <alternativeName>
        <fullName evidence="1">GTP-binding protein EngA</fullName>
    </alternativeName>
</protein>
<accession>Q9JZY1</accession>
<proteinExistence type="inferred from homology"/>
<keyword id="KW-0342">GTP-binding</keyword>
<keyword id="KW-0547">Nucleotide-binding</keyword>
<keyword id="KW-1185">Reference proteome</keyword>
<keyword id="KW-0677">Repeat</keyword>
<keyword id="KW-0690">Ribosome biogenesis</keyword>
<comment type="function">
    <text evidence="1">GTPase that plays an essential role in the late steps of ribosome biogenesis.</text>
</comment>
<comment type="subunit">
    <text evidence="1">Associates with the 50S ribosomal subunit.</text>
</comment>
<comment type="similarity">
    <text evidence="1">Belongs to the TRAFAC class TrmE-Era-EngA-EngB-Septin-like GTPase superfamily. EngA (Der) GTPase family.</text>
</comment>
<gene>
    <name evidence="1" type="primary">der</name>
    <name type="synonym">engA</name>
    <name type="ordered locus">NMB0852</name>
</gene>